<reference key="1">
    <citation type="journal article" date="1999" name="Mol. Gen. Genet.">
        <title>Promoter-tagged restriction enzyme-mediated insertion (PT-REMI) mutagenesis in Aspergillus niger.</title>
        <authorList>
            <person name="Shuster J.R."/>
            <person name="Connelley M.B."/>
        </authorList>
    </citation>
    <scope>NUCLEOTIDE SEQUENCE [GENOMIC DNA]</scope>
</reference>
<proteinExistence type="inferred from homology"/>
<feature type="transit peptide" description="Mitochondrion" evidence="2">
    <location>
        <begin position="1"/>
        <end position="13"/>
    </location>
</feature>
<feature type="chain" id="PRO_0000006094" description="Cytochrome c oxidase polypeptide 5, mitochondrial">
    <location>
        <begin position="14"/>
        <end position="197"/>
    </location>
</feature>
<feature type="topological domain" description="Mitochondrial matrix" evidence="1">
    <location>
        <begin position="14"/>
        <end position="129"/>
    </location>
</feature>
<feature type="transmembrane region" description="Helical" evidence="2">
    <location>
        <begin position="130"/>
        <end position="147"/>
    </location>
</feature>
<feature type="topological domain" description="Mitochondrial intermembrane" evidence="1">
    <location>
        <begin position="148"/>
        <end position="197"/>
    </location>
</feature>
<dbReference type="EMBL" id="AJ132229">
    <property type="protein sequence ID" value="CAA10609.1"/>
    <property type="molecule type" value="Genomic_DNA"/>
</dbReference>
<dbReference type="SMR" id="O93980"/>
<dbReference type="PaxDb" id="5061-CADANGAP00011133"/>
<dbReference type="VEuPathDB" id="FungiDB:An14g04170"/>
<dbReference type="VEuPathDB" id="FungiDB:ASPNIDRAFT2_1141664"/>
<dbReference type="VEuPathDB" id="FungiDB:ATCC64974_3600"/>
<dbReference type="VEuPathDB" id="FungiDB:M747DRAFT_291509"/>
<dbReference type="eggNOG" id="KOG4075">
    <property type="taxonomic scope" value="Eukaryota"/>
</dbReference>
<dbReference type="OrthoDB" id="186013at2759"/>
<dbReference type="UniPathway" id="UPA00705"/>
<dbReference type="GO" id="GO:0005743">
    <property type="term" value="C:mitochondrial inner membrane"/>
    <property type="evidence" value="ECO:0007669"/>
    <property type="project" value="UniProtKB-SubCell"/>
</dbReference>
<dbReference type="GO" id="GO:0045277">
    <property type="term" value="C:respiratory chain complex IV"/>
    <property type="evidence" value="ECO:0007669"/>
    <property type="project" value="InterPro"/>
</dbReference>
<dbReference type="GO" id="GO:0016491">
    <property type="term" value="F:oxidoreductase activity"/>
    <property type="evidence" value="ECO:0007669"/>
    <property type="project" value="UniProtKB-KW"/>
</dbReference>
<dbReference type="GO" id="GO:0006123">
    <property type="term" value="P:mitochondrial electron transport, cytochrome c to oxygen"/>
    <property type="evidence" value="ECO:0007669"/>
    <property type="project" value="InterPro"/>
</dbReference>
<dbReference type="CDD" id="cd00922">
    <property type="entry name" value="Cyt_c_Oxidase_IV"/>
    <property type="match status" value="1"/>
</dbReference>
<dbReference type="FunFam" id="1.10.442.10:FF:000002">
    <property type="entry name" value="Cytochrome c oxidase subunit V"/>
    <property type="match status" value="1"/>
</dbReference>
<dbReference type="Gene3D" id="1.10.442.10">
    <property type="entry name" value="Cytochrome c oxidase subunit IV"/>
    <property type="match status" value="1"/>
</dbReference>
<dbReference type="InterPro" id="IPR004203">
    <property type="entry name" value="Cyt_c_oxidase_su4_fam"/>
</dbReference>
<dbReference type="InterPro" id="IPR036639">
    <property type="entry name" value="Cyt_c_oxidase_su4_sf"/>
</dbReference>
<dbReference type="PANTHER" id="PTHR10707:SF10">
    <property type="entry name" value="CYTOCHROME C OXIDASE SUBUNIT 4"/>
    <property type="match status" value="1"/>
</dbReference>
<dbReference type="PANTHER" id="PTHR10707">
    <property type="entry name" value="CYTOCHROME C OXIDASE SUBUNIT IV"/>
    <property type="match status" value="1"/>
</dbReference>
<dbReference type="Pfam" id="PF02936">
    <property type="entry name" value="COX4"/>
    <property type="match status" value="1"/>
</dbReference>
<dbReference type="SUPFAM" id="SSF81406">
    <property type="entry name" value="Mitochondrial cytochrome c oxidase subunit IV"/>
    <property type="match status" value="1"/>
</dbReference>
<organism>
    <name type="scientific">Aspergillus niger</name>
    <dbReference type="NCBI Taxonomy" id="5061"/>
    <lineage>
        <taxon>Eukaryota</taxon>
        <taxon>Fungi</taxon>
        <taxon>Dikarya</taxon>
        <taxon>Ascomycota</taxon>
        <taxon>Pezizomycotina</taxon>
        <taxon>Eurotiomycetes</taxon>
        <taxon>Eurotiomycetidae</taxon>
        <taxon>Eurotiales</taxon>
        <taxon>Aspergillaceae</taxon>
        <taxon>Aspergillus</taxon>
        <taxon>Aspergillus subgen. Circumdati</taxon>
    </lineage>
</organism>
<sequence>MFLRSVTRAAARSSAVPTTGLRSYRTVSGPMACLNARPQTEKKSIAPQQTRAASEHAISNPTLAGIEKRWEAMPPQEQAELWMQLRDRMKVDWHQMTLQEKKAAYWISFGPHGPRSVPPKGENLKIFFKVAQLTLVSFGIFYVIHLFAKPQPKTMTKEWQEASNEYAKQEKINPIYGISAEGYEGKGFVQSPPAEKQ</sequence>
<comment type="function">
    <text evidence="1">Component of the cytochrome c oxidase, the last enzyme in the mitochondrial electron transport chain which drives oxidative phosphorylation. The respiratory chain contains 3 multisubunit complexes succinate dehydrogenase (complex II, CII), ubiquinol-cytochrome c oxidoreductase (cytochrome b-c1 complex, complex III, CIII) and cytochrome c oxidase (complex IV, CIV), that cooperate to transfer electrons derived from NADH and succinate to molecular oxygen, creating an electrochemical gradient over the inner membrane that drives transmembrane transport and the ATP synthase. Cytochrome c oxidase is the component of the respiratory chain that catalyzes the reduction of oxygen to water. Electrons originating from reduced cytochrome c in the intermembrane space (IMS) are transferred via the dinuclear copper A center (CU(A)) of subunit 2 and heme A of subunit 1 to the active site in subunit 1, a binuclear center (BNC) formed by heme A3 and copper B (CU(B)). The BNC reduces molecular oxygen to 2 water molecules using 4 electrons from cytochrome c in the IMS and 4 protons from the mitochondrial matrix.</text>
</comment>
<comment type="pathway">
    <text evidence="1">Energy metabolism; oxidative phosphorylation.</text>
</comment>
<comment type="subunit">
    <text evidence="1">Component of the cytochrome c oxidase (complex IV, CIV), a multisubunit enzyme composed of a catalytic core of 3 subunits and seevral supernumerary subunits. The complex exists as a monomer or a dimer and forms supercomplexes (SCs) in the inner mitochondrial membrane with ubiquinol-cytochrome c oxidoreductase (cytochrome b-c1 complex, complex III, CIII).</text>
</comment>
<comment type="subcellular location">
    <subcellularLocation>
        <location evidence="1">Mitochondrion inner membrane</location>
        <topology evidence="1">Single-pass membrane protein</topology>
    </subcellularLocation>
</comment>
<comment type="similarity">
    <text evidence="3">Belongs to the cytochrome c oxidase IV family.</text>
</comment>
<name>COX5_ASPNG</name>
<keyword id="KW-0472">Membrane</keyword>
<keyword id="KW-0496">Mitochondrion</keyword>
<keyword id="KW-0999">Mitochondrion inner membrane</keyword>
<keyword id="KW-0560">Oxidoreductase</keyword>
<keyword id="KW-0809">Transit peptide</keyword>
<keyword id="KW-0812">Transmembrane</keyword>
<keyword id="KW-1133">Transmembrane helix</keyword>
<evidence type="ECO:0000250" key="1">
    <source>
        <dbReference type="UniProtKB" id="P00424"/>
    </source>
</evidence>
<evidence type="ECO:0000255" key="2"/>
<evidence type="ECO:0000305" key="3"/>
<gene>
    <name type="primary">cox5</name>
</gene>
<protein>
    <recommendedName>
        <fullName>Cytochrome c oxidase polypeptide 5, mitochondrial</fullName>
    </recommendedName>
    <alternativeName>
        <fullName>Cytochrome c oxidase polypeptide V</fullName>
    </alternativeName>
</protein>
<accession>O93980</accession>